<protein>
    <recommendedName>
        <fullName evidence="1">UvrABC system protein C</fullName>
        <shortName evidence="1">Protein UvrC</shortName>
    </recommendedName>
    <alternativeName>
        <fullName evidence="1">Excinuclease ABC subunit C</fullName>
    </alternativeName>
</protein>
<feature type="chain" id="PRO_1000200585" description="UvrABC system protein C">
    <location>
        <begin position="1"/>
        <end position="610"/>
    </location>
</feature>
<feature type="domain" description="GIY-YIG" evidence="1">
    <location>
        <begin position="16"/>
        <end position="94"/>
    </location>
</feature>
<feature type="domain" description="UVR" evidence="1">
    <location>
        <begin position="204"/>
        <end position="239"/>
    </location>
</feature>
<proteinExistence type="inferred from homology"/>
<sequence length="610" mass="68255">MSDQFDAKAFLKTVTSQPGVYRMYDAGGTVIYVGKAKDLKKRLSSYFRSNLASRKTEALVAQIQQIDVTVTHTETEALLLEHNYIKLYQPRYNVLLRDDKSYPFIFLSGDTHPRLAMHRGAKHAKGEYFGPFPNGYAVRETLALLQKIFPIRQCENSVYRNRSRPCLQYQIGRCLGPCVEGLVSEEEYAQQVEYVRLFLSGKDDQVLTQLISRMETASQNLEFEEAARIRDQIQAVRRVTEKQFVSNTGDDLDVIGVAFDAGMACVHVLFIRQGKVLGSRSYFPKVPGSTELSEVVETFVGQFYLQGSQMRTLPGEILLDFNLSDKTLLADSLSELAGRKINVQTKPRGDRARYLKLARTNAATALTSKLSQQSTVHQRLTALASVLKLPEVKRMECFDISHTMGEQTVASCVVFDANGPLRAEYRRYNITGITPGDDYAAMHQVLRRRYGKAIDDSKIPDVILIDGGKGQLAQAKNVFAELDVSWDKNHPLLLGVAKGADRKAGLETLFFEPEGEGFSLPPDSPALHVIQHIRDESHDHAIGGHRKKRAKVKNTSSLETIEGIGPKRRQMLLKYMGGLQGLRNASVEEIAKVPGISQGLAEKIFWSLKH</sequence>
<keyword id="KW-0963">Cytoplasm</keyword>
<keyword id="KW-0227">DNA damage</keyword>
<keyword id="KW-0228">DNA excision</keyword>
<keyword id="KW-0234">DNA repair</keyword>
<keyword id="KW-0267">Excision nuclease</keyword>
<keyword id="KW-1185">Reference proteome</keyword>
<keyword id="KW-0742">SOS response</keyword>
<organism>
    <name type="scientific">Escherichia coli O45:K1 (strain S88 / ExPEC)</name>
    <dbReference type="NCBI Taxonomy" id="585035"/>
    <lineage>
        <taxon>Bacteria</taxon>
        <taxon>Pseudomonadati</taxon>
        <taxon>Pseudomonadota</taxon>
        <taxon>Gammaproteobacteria</taxon>
        <taxon>Enterobacterales</taxon>
        <taxon>Enterobacteriaceae</taxon>
        <taxon>Escherichia</taxon>
    </lineage>
</organism>
<dbReference type="EMBL" id="CU928161">
    <property type="protein sequence ID" value="CAR03267.1"/>
    <property type="molecule type" value="Genomic_DNA"/>
</dbReference>
<dbReference type="RefSeq" id="WP_001283433.1">
    <property type="nucleotide sequence ID" value="NC_011742.1"/>
</dbReference>
<dbReference type="SMR" id="B7MCH0"/>
<dbReference type="KEGG" id="ecz:ECS88_1967"/>
<dbReference type="HOGENOM" id="CLU_014841_3_0_6"/>
<dbReference type="Proteomes" id="UP000000747">
    <property type="component" value="Chromosome"/>
</dbReference>
<dbReference type="GO" id="GO:0005737">
    <property type="term" value="C:cytoplasm"/>
    <property type="evidence" value="ECO:0007669"/>
    <property type="project" value="UniProtKB-SubCell"/>
</dbReference>
<dbReference type="GO" id="GO:0009380">
    <property type="term" value="C:excinuclease repair complex"/>
    <property type="evidence" value="ECO:0007669"/>
    <property type="project" value="InterPro"/>
</dbReference>
<dbReference type="GO" id="GO:0003677">
    <property type="term" value="F:DNA binding"/>
    <property type="evidence" value="ECO:0007669"/>
    <property type="project" value="UniProtKB-UniRule"/>
</dbReference>
<dbReference type="GO" id="GO:0009381">
    <property type="term" value="F:excinuclease ABC activity"/>
    <property type="evidence" value="ECO:0007669"/>
    <property type="project" value="UniProtKB-UniRule"/>
</dbReference>
<dbReference type="GO" id="GO:0006289">
    <property type="term" value="P:nucleotide-excision repair"/>
    <property type="evidence" value="ECO:0007669"/>
    <property type="project" value="UniProtKB-UniRule"/>
</dbReference>
<dbReference type="GO" id="GO:0009432">
    <property type="term" value="P:SOS response"/>
    <property type="evidence" value="ECO:0007669"/>
    <property type="project" value="UniProtKB-UniRule"/>
</dbReference>
<dbReference type="CDD" id="cd10434">
    <property type="entry name" value="GIY-YIG_UvrC_Cho"/>
    <property type="match status" value="1"/>
</dbReference>
<dbReference type="FunFam" id="1.10.150.20:FF:000005">
    <property type="entry name" value="UvrABC system protein C"/>
    <property type="match status" value="1"/>
</dbReference>
<dbReference type="FunFam" id="3.30.420.340:FF:000001">
    <property type="entry name" value="UvrABC system protein C"/>
    <property type="match status" value="1"/>
</dbReference>
<dbReference type="FunFam" id="3.40.1440.10:FF:000001">
    <property type="entry name" value="UvrABC system protein C"/>
    <property type="match status" value="1"/>
</dbReference>
<dbReference type="FunFam" id="4.10.860.10:FF:000002">
    <property type="entry name" value="UvrABC system protein C"/>
    <property type="match status" value="1"/>
</dbReference>
<dbReference type="Gene3D" id="1.10.150.20">
    <property type="entry name" value="5' to 3' exonuclease, C-terminal subdomain"/>
    <property type="match status" value="1"/>
</dbReference>
<dbReference type="Gene3D" id="3.40.1440.10">
    <property type="entry name" value="GIY-YIG endonuclease"/>
    <property type="match status" value="1"/>
</dbReference>
<dbReference type="Gene3D" id="4.10.860.10">
    <property type="entry name" value="UVR domain"/>
    <property type="match status" value="1"/>
</dbReference>
<dbReference type="Gene3D" id="3.30.420.340">
    <property type="entry name" value="UvrC, RNAse H endonuclease domain"/>
    <property type="match status" value="1"/>
</dbReference>
<dbReference type="HAMAP" id="MF_00203">
    <property type="entry name" value="UvrC"/>
    <property type="match status" value="1"/>
</dbReference>
<dbReference type="InterPro" id="IPR000305">
    <property type="entry name" value="GIY-YIG_endonuc"/>
</dbReference>
<dbReference type="InterPro" id="IPR035901">
    <property type="entry name" value="GIY-YIG_endonuc_sf"/>
</dbReference>
<dbReference type="InterPro" id="IPR047296">
    <property type="entry name" value="GIY-YIG_UvrC_Cho"/>
</dbReference>
<dbReference type="InterPro" id="IPR003583">
    <property type="entry name" value="Hlx-hairpin-Hlx_DNA-bd_motif"/>
</dbReference>
<dbReference type="InterPro" id="IPR010994">
    <property type="entry name" value="RuvA_2-like"/>
</dbReference>
<dbReference type="InterPro" id="IPR001943">
    <property type="entry name" value="UVR_dom"/>
</dbReference>
<dbReference type="InterPro" id="IPR036876">
    <property type="entry name" value="UVR_dom_sf"/>
</dbReference>
<dbReference type="InterPro" id="IPR050066">
    <property type="entry name" value="UvrABC_protein_C"/>
</dbReference>
<dbReference type="InterPro" id="IPR004791">
    <property type="entry name" value="UvrC"/>
</dbReference>
<dbReference type="InterPro" id="IPR001162">
    <property type="entry name" value="UvrC_RNase_H_dom"/>
</dbReference>
<dbReference type="InterPro" id="IPR038476">
    <property type="entry name" value="UvrC_RNase_H_dom_sf"/>
</dbReference>
<dbReference type="NCBIfam" id="NF001824">
    <property type="entry name" value="PRK00558.1-5"/>
    <property type="match status" value="1"/>
</dbReference>
<dbReference type="NCBIfam" id="TIGR00194">
    <property type="entry name" value="uvrC"/>
    <property type="match status" value="1"/>
</dbReference>
<dbReference type="PANTHER" id="PTHR30562:SF1">
    <property type="entry name" value="UVRABC SYSTEM PROTEIN C"/>
    <property type="match status" value="1"/>
</dbReference>
<dbReference type="PANTHER" id="PTHR30562">
    <property type="entry name" value="UVRC/OXIDOREDUCTASE"/>
    <property type="match status" value="1"/>
</dbReference>
<dbReference type="Pfam" id="PF01541">
    <property type="entry name" value="GIY-YIG"/>
    <property type="match status" value="1"/>
</dbReference>
<dbReference type="Pfam" id="PF14520">
    <property type="entry name" value="HHH_5"/>
    <property type="match status" value="1"/>
</dbReference>
<dbReference type="Pfam" id="PF02151">
    <property type="entry name" value="UVR"/>
    <property type="match status" value="1"/>
</dbReference>
<dbReference type="Pfam" id="PF22920">
    <property type="entry name" value="UvrC_RNaseH"/>
    <property type="match status" value="1"/>
</dbReference>
<dbReference type="Pfam" id="PF08459">
    <property type="entry name" value="UvrC_RNaseH_dom"/>
    <property type="match status" value="1"/>
</dbReference>
<dbReference type="SMART" id="SM00465">
    <property type="entry name" value="GIYc"/>
    <property type="match status" value="1"/>
</dbReference>
<dbReference type="SMART" id="SM00278">
    <property type="entry name" value="HhH1"/>
    <property type="match status" value="2"/>
</dbReference>
<dbReference type="SUPFAM" id="SSF46600">
    <property type="entry name" value="C-terminal UvrC-binding domain of UvrB"/>
    <property type="match status" value="1"/>
</dbReference>
<dbReference type="SUPFAM" id="SSF82771">
    <property type="entry name" value="GIY-YIG endonuclease"/>
    <property type="match status" value="1"/>
</dbReference>
<dbReference type="SUPFAM" id="SSF47781">
    <property type="entry name" value="RuvA domain 2-like"/>
    <property type="match status" value="1"/>
</dbReference>
<dbReference type="PROSITE" id="PS50164">
    <property type="entry name" value="GIY_YIG"/>
    <property type="match status" value="1"/>
</dbReference>
<dbReference type="PROSITE" id="PS50151">
    <property type="entry name" value="UVR"/>
    <property type="match status" value="1"/>
</dbReference>
<dbReference type="PROSITE" id="PS50165">
    <property type="entry name" value="UVRC"/>
    <property type="match status" value="1"/>
</dbReference>
<evidence type="ECO:0000255" key="1">
    <source>
        <dbReference type="HAMAP-Rule" id="MF_00203"/>
    </source>
</evidence>
<gene>
    <name evidence="1" type="primary">uvrC</name>
    <name type="ordered locus">ECS88_1967</name>
</gene>
<name>UVRC_ECO45</name>
<comment type="function">
    <text evidence="1">The UvrABC repair system catalyzes the recognition and processing of DNA lesions. UvrC both incises the 5' and 3' sides of the lesion. The N-terminal half is responsible for the 3' incision and the C-terminal half is responsible for the 5' incision.</text>
</comment>
<comment type="subunit">
    <text evidence="1">Interacts with UvrB in an incision complex.</text>
</comment>
<comment type="subcellular location">
    <subcellularLocation>
        <location evidence="1">Cytoplasm</location>
    </subcellularLocation>
</comment>
<comment type="similarity">
    <text evidence="1">Belongs to the UvrC family.</text>
</comment>
<reference key="1">
    <citation type="journal article" date="2009" name="PLoS Genet.">
        <title>Organised genome dynamics in the Escherichia coli species results in highly diverse adaptive paths.</title>
        <authorList>
            <person name="Touchon M."/>
            <person name="Hoede C."/>
            <person name="Tenaillon O."/>
            <person name="Barbe V."/>
            <person name="Baeriswyl S."/>
            <person name="Bidet P."/>
            <person name="Bingen E."/>
            <person name="Bonacorsi S."/>
            <person name="Bouchier C."/>
            <person name="Bouvet O."/>
            <person name="Calteau A."/>
            <person name="Chiapello H."/>
            <person name="Clermont O."/>
            <person name="Cruveiller S."/>
            <person name="Danchin A."/>
            <person name="Diard M."/>
            <person name="Dossat C."/>
            <person name="Karoui M.E."/>
            <person name="Frapy E."/>
            <person name="Garry L."/>
            <person name="Ghigo J.M."/>
            <person name="Gilles A.M."/>
            <person name="Johnson J."/>
            <person name="Le Bouguenec C."/>
            <person name="Lescat M."/>
            <person name="Mangenot S."/>
            <person name="Martinez-Jehanne V."/>
            <person name="Matic I."/>
            <person name="Nassif X."/>
            <person name="Oztas S."/>
            <person name="Petit M.A."/>
            <person name="Pichon C."/>
            <person name="Rouy Z."/>
            <person name="Ruf C.S."/>
            <person name="Schneider D."/>
            <person name="Tourret J."/>
            <person name="Vacherie B."/>
            <person name="Vallenet D."/>
            <person name="Medigue C."/>
            <person name="Rocha E.P.C."/>
            <person name="Denamur E."/>
        </authorList>
    </citation>
    <scope>NUCLEOTIDE SEQUENCE [LARGE SCALE GENOMIC DNA]</scope>
    <source>
        <strain>S88 / ExPEC</strain>
    </source>
</reference>
<accession>B7MCH0</accession>